<proteinExistence type="inferred from homology"/>
<dbReference type="EMBL" id="U56736">
    <property type="protein sequence ID" value="AAD14869.1"/>
    <property type="molecule type" value="Genomic_DNA"/>
</dbReference>
<dbReference type="EMBL" id="U00096">
    <property type="protein sequence ID" value="AAC75050.1"/>
    <property type="molecule type" value="Genomic_DNA"/>
</dbReference>
<dbReference type="EMBL" id="AP009048">
    <property type="protein sequence ID" value="BAA15806.1"/>
    <property type="molecule type" value="Genomic_DNA"/>
</dbReference>
<dbReference type="EMBL" id="L31639">
    <property type="protein sequence ID" value="AAA99928.1"/>
    <property type="molecule type" value="Genomic_DNA"/>
</dbReference>
<dbReference type="PIR" id="D64963">
    <property type="entry name" value="D64963"/>
</dbReference>
<dbReference type="RefSeq" id="NP_416493.1">
    <property type="nucleotide sequence ID" value="NC_000913.3"/>
</dbReference>
<dbReference type="RefSeq" id="WP_001011462.1">
    <property type="nucleotide sequence ID" value="NZ_SSUV01000031.1"/>
</dbReference>
<dbReference type="SMR" id="Q47005"/>
<dbReference type="BioGRID" id="4260407">
    <property type="interactions" value="99"/>
</dbReference>
<dbReference type="FunCoup" id="Q47005">
    <property type="interactions" value="525"/>
</dbReference>
<dbReference type="IntAct" id="Q47005">
    <property type="interactions" value="1"/>
</dbReference>
<dbReference type="STRING" id="511145.b1988"/>
<dbReference type="PaxDb" id="511145-b1988"/>
<dbReference type="DNASU" id="946501"/>
<dbReference type="EnsemblBacteria" id="AAC75050">
    <property type="protein sequence ID" value="AAC75050"/>
    <property type="gene ID" value="b1988"/>
</dbReference>
<dbReference type="GeneID" id="946501"/>
<dbReference type="KEGG" id="ecj:JW1967"/>
<dbReference type="KEGG" id="eco:b1988"/>
<dbReference type="KEGG" id="ecoc:C3026_11220"/>
<dbReference type="PATRIC" id="fig|1411691.4.peg.265"/>
<dbReference type="EchoBASE" id="EB4013"/>
<dbReference type="eggNOG" id="COG0583">
    <property type="taxonomic scope" value="Bacteria"/>
</dbReference>
<dbReference type="HOGENOM" id="CLU_039613_6_5_6"/>
<dbReference type="InParanoid" id="Q47005"/>
<dbReference type="OMA" id="QMIMNGR"/>
<dbReference type="OrthoDB" id="8479357at2"/>
<dbReference type="PhylomeDB" id="Q47005"/>
<dbReference type="BioCyc" id="EcoCyc:G7072-MONOMER"/>
<dbReference type="PRO" id="PR:Q47005"/>
<dbReference type="Proteomes" id="UP000000625">
    <property type="component" value="Chromosome"/>
</dbReference>
<dbReference type="GO" id="GO:0003677">
    <property type="term" value="F:DNA binding"/>
    <property type="evidence" value="ECO:0007669"/>
    <property type="project" value="UniProtKB-KW"/>
</dbReference>
<dbReference type="GO" id="GO:0003700">
    <property type="term" value="F:DNA-binding transcription factor activity"/>
    <property type="evidence" value="ECO:0000314"/>
    <property type="project" value="EcoCyc"/>
</dbReference>
<dbReference type="GO" id="GO:0045892">
    <property type="term" value="P:negative regulation of DNA-templated transcription"/>
    <property type="evidence" value="ECO:0000314"/>
    <property type="project" value="EcoCyc"/>
</dbReference>
<dbReference type="GO" id="GO:0042128">
    <property type="term" value="P:nitrate assimilation"/>
    <property type="evidence" value="ECO:0007669"/>
    <property type="project" value="UniProtKB-KW"/>
</dbReference>
<dbReference type="GO" id="GO:0045893">
    <property type="term" value="P:positive regulation of DNA-templated transcription"/>
    <property type="evidence" value="ECO:0000314"/>
    <property type="project" value="EcoCyc"/>
</dbReference>
<dbReference type="GO" id="GO:2000142">
    <property type="term" value="P:regulation of DNA-templated transcription initiation"/>
    <property type="evidence" value="ECO:0000318"/>
    <property type="project" value="GO_Central"/>
</dbReference>
<dbReference type="CDD" id="cd08433">
    <property type="entry name" value="PBP2_Nac"/>
    <property type="match status" value="1"/>
</dbReference>
<dbReference type="FunFam" id="1.10.10.10:FF:000001">
    <property type="entry name" value="LysR family transcriptional regulator"/>
    <property type="match status" value="1"/>
</dbReference>
<dbReference type="FunFam" id="3.40.190.290:FF:000016">
    <property type="entry name" value="Nitrogen assimilation regulatory protein nac"/>
    <property type="match status" value="1"/>
</dbReference>
<dbReference type="Gene3D" id="3.40.190.290">
    <property type="match status" value="1"/>
</dbReference>
<dbReference type="Gene3D" id="1.10.10.10">
    <property type="entry name" value="Winged helix-like DNA-binding domain superfamily/Winged helix DNA-binding domain"/>
    <property type="match status" value="1"/>
</dbReference>
<dbReference type="InterPro" id="IPR005119">
    <property type="entry name" value="LysR_subst-bd"/>
</dbReference>
<dbReference type="InterPro" id="IPR000847">
    <property type="entry name" value="Tscrpt_reg_HTH_LysR"/>
</dbReference>
<dbReference type="InterPro" id="IPR036388">
    <property type="entry name" value="WH-like_DNA-bd_sf"/>
</dbReference>
<dbReference type="InterPro" id="IPR036390">
    <property type="entry name" value="WH_DNA-bd_sf"/>
</dbReference>
<dbReference type="NCBIfam" id="NF008410">
    <property type="entry name" value="PRK11233.1"/>
    <property type="match status" value="1"/>
</dbReference>
<dbReference type="PANTHER" id="PTHR30293:SF0">
    <property type="entry name" value="NITROGEN ASSIMILATION REGULATORY PROTEIN NAC"/>
    <property type="match status" value="1"/>
</dbReference>
<dbReference type="PANTHER" id="PTHR30293">
    <property type="entry name" value="TRANSCRIPTIONAL REGULATORY PROTEIN NAC-RELATED"/>
    <property type="match status" value="1"/>
</dbReference>
<dbReference type="Pfam" id="PF00126">
    <property type="entry name" value="HTH_1"/>
    <property type="match status" value="1"/>
</dbReference>
<dbReference type="Pfam" id="PF03466">
    <property type="entry name" value="LysR_substrate"/>
    <property type="match status" value="1"/>
</dbReference>
<dbReference type="PRINTS" id="PR00039">
    <property type="entry name" value="HTHLYSR"/>
</dbReference>
<dbReference type="SUPFAM" id="SSF53850">
    <property type="entry name" value="Periplasmic binding protein-like II"/>
    <property type="match status" value="1"/>
</dbReference>
<dbReference type="SUPFAM" id="SSF46785">
    <property type="entry name" value="Winged helix' DNA-binding domain"/>
    <property type="match status" value="1"/>
</dbReference>
<dbReference type="PROSITE" id="PS50931">
    <property type="entry name" value="HTH_LYSR"/>
    <property type="match status" value="1"/>
</dbReference>
<name>NAC_ECOLI</name>
<sequence length="305" mass="32835">MNFRRLKYFVKIVDIGSLTQAAEVLHIAQPALSQQVATLEGELNQQLLIRTKRGVTPTDAGKILYTHARAILRQCEQAQLAVHNVGQALSGQVSIGFAPGTAASSITMPLLQAVRAEFPEIVIYLHENSGAVLNEKLINHQLDMAVIYEHSPVAGVSSQALLKEDLFLVGTQDCPGQSVDVNAIAQMNLFLPSDYSAIRLRVDEAFSLRRLTAKVIGEIESIATLTAAIASGMGVAVLPESAARSLCGAVNGWMSRITTPSMSLSLSLNLPARANLSPQAQAVKELLMSVISSPVMEKRQWQLVS</sequence>
<comment type="function">
    <text evidence="1">Transcriptional activator for the hut, put and ure operons and repressor for the gdh and gltB operons in response to nitrogen limitation. Negative regulator of its own expression (By similarity).</text>
</comment>
<comment type="similarity">
    <text evidence="3">Belongs to the LysR transcriptional regulatory family.</text>
</comment>
<protein>
    <recommendedName>
        <fullName>Nitrogen assimilation regulatory protein nac</fullName>
    </recommendedName>
    <alternativeName>
        <fullName>Nitrogen assimilation control protein</fullName>
    </alternativeName>
</protein>
<feature type="chain" id="PRO_0000105686" description="Nitrogen assimilation regulatory protein nac">
    <location>
        <begin position="1"/>
        <end position="305"/>
    </location>
</feature>
<feature type="domain" description="HTH lysR-type" evidence="2">
    <location>
        <begin position="1"/>
        <end position="58"/>
    </location>
</feature>
<feature type="DNA-binding region" description="H-T-H motif" evidence="2">
    <location>
        <begin position="18"/>
        <end position="37"/>
    </location>
</feature>
<reference key="1">
    <citation type="journal article" date="1998" name="J. Bacteriol.">
        <title>The nac (nitrogen assimilation control) gene from Escherichia coli.</title>
        <authorList>
            <person name="Muse W.B."/>
            <person name="Bender R.A."/>
        </authorList>
    </citation>
    <scope>NUCLEOTIDE SEQUENCE [GENOMIC DNA]</scope>
    <source>
        <strain>K12</strain>
    </source>
</reference>
<reference key="2">
    <citation type="journal article" date="1996" name="DNA Res.">
        <title>A 460-kb DNA sequence of the Escherichia coli K-12 genome corresponding to the 40.1-50.0 min region on the linkage map.</title>
        <authorList>
            <person name="Itoh T."/>
            <person name="Aiba H."/>
            <person name="Baba T."/>
            <person name="Fujita K."/>
            <person name="Hayashi K."/>
            <person name="Inada T."/>
            <person name="Isono K."/>
            <person name="Kasai H."/>
            <person name="Kimura S."/>
            <person name="Kitakawa M."/>
            <person name="Kitagawa M."/>
            <person name="Makino K."/>
            <person name="Miki T."/>
            <person name="Mizobuchi K."/>
            <person name="Mori H."/>
            <person name="Mori T."/>
            <person name="Motomura K."/>
            <person name="Nakade S."/>
            <person name="Nakamura Y."/>
            <person name="Nashimoto H."/>
            <person name="Nishio Y."/>
            <person name="Oshima T."/>
            <person name="Saito N."/>
            <person name="Sampei G."/>
            <person name="Seki Y."/>
            <person name="Sivasundaram S."/>
            <person name="Tagami H."/>
            <person name="Takeda J."/>
            <person name="Takemoto K."/>
            <person name="Wada C."/>
            <person name="Yamamoto Y."/>
            <person name="Horiuchi T."/>
        </authorList>
    </citation>
    <scope>NUCLEOTIDE SEQUENCE [LARGE SCALE GENOMIC DNA]</scope>
    <source>
        <strain>K12 / W3110 / ATCC 27325 / DSM 5911</strain>
    </source>
</reference>
<reference key="3">
    <citation type="journal article" date="1997" name="Science">
        <title>The complete genome sequence of Escherichia coli K-12.</title>
        <authorList>
            <person name="Blattner F.R."/>
            <person name="Plunkett G. III"/>
            <person name="Bloch C.A."/>
            <person name="Perna N.T."/>
            <person name="Burland V."/>
            <person name="Riley M."/>
            <person name="Collado-Vides J."/>
            <person name="Glasner J.D."/>
            <person name="Rode C.K."/>
            <person name="Mayhew G.F."/>
            <person name="Gregor J."/>
            <person name="Davis N.W."/>
            <person name="Kirkpatrick H.A."/>
            <person name="Goeden M.A."/>
            <person name="Rose D.J."/>
            <person name="Mau B."/>
            <person name="Shao Y."/>
        </authorList>
    </citation>
    <scope>NUCLEOTIDE SEQUENCE [LARGE SCALE GENOMIC DNA]</scope>
    <source>
        <strain>K12 / MG1655 / ATCC 47076</strain>
    </source>
</reference>
<reference key="4">
    <citation type="journal article" date="2006" name="Mol. Syst. Biol.">
        <title>Highly accurate genome sequences of Escherichia coli K-12 strains MG1655 and W3110.</title>
        <authorList>
            <person name="Hayashi K."/>
            <person name="Morooka N."/>
            <person name="Yamamoto Y."/>
            <person name="Fujita K."/>
            <person name="Isono K."/>
            <person name="Choi S."/>
            <person name="Ohtsubo E."/>
            <person name="Baba T."/>
            <person name="Wanner B.L."/>
            <person name="Mori H."/>
            <person name="Horiuchi T."/>
        </authorList>
    </citation>
    <scope>NUCLEOTIDE SEQUENCE [LARGE SCALE GENOMIC DNA]</scope>
    <source>
        <strain>K12 / W3110 / ATCC 27325 / DSM 5911</strain>
    </source>
</reference>
<reference key="5">
    <citation type="journal article" date="1995" name="Gene">
        <title>A new gene, cbl, encoding a member of the LysR family of transcriptional regulators belongs to Escherichia coli cys regulon.</title>
        <authorList>
            <person name="Iwanicka-Nowicka R."/>
            <person name="Hryniewicz M.M."/>
        </authorList>
    </citation>
    <scope>NUCLEOTIDE SEQUENCE [GENOMIC DNA] OF 245-305</scope>
    <source>
        <strain>K12</strain>
    </source>
</reference>
<organism>
    <name type="scientific">Escherichia coli (strain K12)</name>
    <dbReference type="NCBI Taxonomy" id="83333"/>
    <lineage>
        <taxon>Bacteria</taxon>
        <taxon>Pseudomonadati</taxon>
        <taxon>Pseudomonadota</taxon>
        <taxon>Gammaproteobacteria</taxon>
        <taxon>Enterobacterales</taxon>
        <taxon>Enterobacteriaceae</taxon>
        <taxon>Escherichia</taxon>
    </lineage>
</organism>
<evidence type="ECO:0000250" key="1"/>
<evidence type="ECO:0000255" key="2">
    <source>
        <dbReference type="PROSITE-ProRule" id="PRU00253"/>
    </source>
</evidence>
<evidence type="ECO:0000305" key="3"/>
<accession>Q47005</accession>
<accession>Q47082</accession>
<keyword id="KW-0010">Activator</keyword>
<keyword id="KW-0238">DNA-binding</keyword>
<keyword id="KW-0534">Nitrate assimilation</keyword>
<keyword id="KW-1185">Reference proteome</keyword>
<keyword id="KW-0678">Repressor</keyword>
<keyword id="KW-0804">Transcription</keyword>
<keyword id="KW-0805">Transcription regulation</keyword>
<gene>
    <name type="primary">nac</name>
    <name type="ordered locus">b1988</name>
    <name type="ordered locus">JW1967</name>
</gene>